<protein>
    <recommendedName>
        <fullName>Sperm-specific protein Phi-1</fullName>
    </recommendedName>
</protein>
<reference key="1">
    <citation type="journal article" date="1993" name="Nucleic Acids Res.">
        <title>Molecular cloning and sequence of a cDNA for the sperm-specific protein phi 1 from the mussel Mytilus edulis.</title>
        <authorList>
            <person name="Ruiz-Lara S."/>
            <person name="Prats E."/>
            <person name="Casas M.T."/>
            <person name="Cornudella L."/>
        </authorList>
    </citation>
    <scope>NUCLEOTIDE SEQUENCE [MRNA]</scope>
    <source>
        <tissue>Sperm</tissue>
    </source>
</reference>
<name>PHI1_MYTED</name>
<keyword id="KW-0158">Chromosome</keyword>
<keyword id="KW-0217">Developmental protein</keyword>
<keyword id="KW-0221">Differentiation</keyword>
<keyword id="KW-0238">DNA-binding</keyword>
<keyword id="KW-0544">Nucleosome core</keyword>
<keyword id="KW-0539">Nucleus</keyword>
<keyword id="KW-0744">Spermatogenesis</keyword>
<evidence type="ECO:0000256" key="1">
    <source>
        <dbReference type="SAM" id="MobiDB-lite"/>
    </source>
</evidence>
<sequence>MPSPTRRSSKSRSKSRSRSRSASASPGKAAKRARSKTPRRGKKRARSPSKKARRRSRSTKKTAAKRRKRSSSPKKRRSAGKRRVRAKKKKKK</sequence>
<dbReference type="EMBL" id="X69718">
    <property type="protein sequence ID" value="CAA49375.1"/>
    <property type="molecule type" value="mRNA"/>
</dbReference>
<dbReference type="PIR" id="S34115">
    <property type="entry name" value="S34115"/>
</dbReference>
<dbReference type="SMR" id="Q04621"/>
<dbReference type="GO" id="GO:0000786">
    <property type="term" value="C:nucleosome"/>
    <property type="evidence" value="ECO:0007669"/>
    <property type="project" value="UniProtKB-KW"/>
</dbReference>
<dbReference type="GO" id="GO:0005634">
    <property type="term" value="C:nucleus"/>
    <property type="evidence" value="ECO:0007669"/>
    <property type="project" value="UniProtKB-SubCell"/>
</dbReference>
<dbReference type="GO" id="GO:0003677">
    <property type="term" value="F:DNA binding"/>
    <property type="evidence" value="ECO:0007669"/>
    <property type="project" value="UniProtKB-KW"/>
</dbReference>
<dbReference type="GO" id="GO:0030154">
    <property type="term" value="P:cell differentiation"/>
    <property type="evidence" value="ECO:0007669"/>
    <property type="project" value="UniProtKB-KW"/>
</dbReference>
<dbReference type="GO" id="GO:0007283">
    <property type="term" value="P:spermatogenesis"/>
    <property type="evidence" value="ECO:0007669"/>
    <property type="project" value="UniProtKB-KW"/>
</dbReference>
<organism>
    <name type="scientific">Mytilus edulis</name>
    <name type="common">Blue mussel</name>
    <dbReference type="NCBI Taxonomy" id="6550"/>
    <lineage>
        <taxon>Eukaryota</taxon>
        <taxon>Metazoa</taxon>
        <taxon>Spiralia</taxon>
        <taxon>Lophotrochozoa</taxon>
        <taxon>Mollusca</taxon>
        <taxon>Bivalvia</taxon>
        <taxon>Autobranchia</taxon>
        <taxon>Pteriomorphia</taxon>
        <taxon>Mytilida</taxon>
        <taxon>Mytiloidea</taxon>
        <taxon>Mytilidae</taxon>
        <taxon>Mytilinae</taxon>
        <taxon>Mytilus</taxon>
    </lineage>
</organism>
<feature type="initiator methionine" description="Removed">
    <location>
        <position position="1"/>
    </location>
</feature>
<feature type="chain" id="PRO_0000106635" description="Sperm-specific protein Phi-1">
    <location>
        <begin position="2"/>
        <end position="92"/>
    </location>
</feature>
<feature type="region of interest" description="Disordered" evidence="1">
    <location>
        <begin position="1"/>
        <end position="92"/>
    </location>
</feature>
<feature type="compositionally biased region" description="Basic residues" evidence="1">
    <location>
        <begin position="7"/>
        <end position="19"/>
    </location>
</feature>
<feature type="compositionally biased region" description="Basic residues" evidence="1">
    <location>
        <begin position="29"/>
        <end position="92"/>
    </location>
</feature>
<proteinExistence type="evidence at transcript level"/>
<comment type="function">
    <text>Involved in nuclear basic protein transition: histones are replaced by spermatid specific proteins which are themselves replaced by protamines in late spermatids.</text>
</comment>
<comment type="subcellular location">
    <subcellularLocation>
        <location>Nucleus</location>
    </subcellularLocation>
    <subcellularLocation>
        <location>Chromosome</location>
    </subcellularLocation>
</comment>
<comment type="tissue specificity">
    <text>Sperm.</text>
</comment>
<accession>Q04621</accession>